<name>LYS4_NEUCR</name>
<feature type="transit peptide" description="Mitochondrion" evidence="2">
    <location>
        <begin position="1"/>
        <end position="32"/>
    </location>
</feature>
<feature type="chain" id="PRO_0000247926" description="Homoaconitase, mitochondrial">
    <location>
        <begin position="33"/>
        <end position="784"/>
    </location>
</feature>
<feature type="region of interest" description="Disordered" evidence="3">
    <location>
        <begin position="572"/>
        <end position="596"/>
    </location>
</feature>
<feature type="compositionally biased region" description="Low complexity" evidence="3">
    <location>
        <begin position="578"/>
        <end position="589"/>
    </location>
</feature>
<feature type="binding site" evidence="1">
    <location>
        <position position="399"/>
    </location>
    <ligand>
        <name>[4Fe-4S] cluster</name>
        <dbReference type="ChEBI" id="CHEBI:49883"/>
    </ligand>
</feature>
<feature type="binding site" evidence="1">
    <location>
        <position position="468"/>
    </location>
    <ligand>
        <name>[4Fe-4S] cluster</name>
        <dbReference type="ChEBI" id="CHEBI:49883"/>
    </ligand>
</feature>
<feature type="binding site" evidence="1">
    <location>
        <position position="471"/>
    </location>
    <ligand>
        <name>[4Fe-4S] cluster</name>
        <dbReference type="ChEBI" id="CHEBI:49883"/>
    </ligand>
</feature>
<comment type="function">
    <text evidence="1">Catalyzes the reversible hydration of cis-homoaconitate to (2R,3S)-homoisocitrate, a step in the alpha-aminoadipate pathway for lysine biosynthesis.</text>
</comment>
<comment type="catalytic activity">
    <reaction>
        <text>(2R,3S)-homoisocitrate = cis-homoaconitate + H2O</text>
        <dbReference type="Rhea" id="RHEA:15485"/>
        <dbReference type="ChEBI" id="CHEBI:15377"/>
        <dbReference type="ChEBI" id="CHEBI:15404"/>
        <dbReference type="ChEBI" id="CHEBI:58174"/>
        <dbReference type="EC" id="4.2.1.36"/>
    </reaction>
</comment>
<comment type="cofactor">
    <cofactor evidence="1">
        <name>[4Fe-4S] cluster</name>
        <dbReference type="ChEBI" id="CHEBI:49883"/>
    </cofactor>
    <text evidence="1">Binds 1 [4Fe-4S] cluster per subunit.</text>
</comment>
<comment type="pathway">
    <text>Amino-acid biosynthesis; L-lysine biosynthesis via AAA pathway; L-alpha-aminoadipate from 2-oxoglutarate: step 3/5.</text>
</comment>
<comment type="subcellular location">
    <subcellularLocation>
        <location evidence="1">Mitochondrion</location>
    </subcellularLocation>
</comment>
<comment type="similarity">
    <text evidence="4">Belongs to the aconitase/IPM isomerase family.</text>
</comment>
<sequence length="784" mass="83905">MIHPVRRALAVAASRAPRQFLAAASRTTSVRSVRAAAASGSYYSTTSRRLQDAFPSQLENLASSTLPKVVPQVPQTLTEKIVQRYSVGLAPGKKVKSGDYVTLQPHHCMTHDNSWPVAMKFMSIGASKIHDNRQVVMTLDHDVQNKSEANLKKYRQIEEFANTHGVDFYPAGRGIGHQIMVEEGYAWPGTVTVASDSHSNMYGGVGCLGTPMVRTDAASIWATGKTWWQIPPIAKVTFTGLLPPGVTGKDVIVALCGLFNNDDVLNHAIEFTGAEETMRSIPVDDRLTIANMTTEWGALSGLFPIDAVLASWMRAKATVTAMEHPELGDKAKFTHAKIDALLENPLVADPGATYAKQLYLNLSTLSPFVAGPNSVKIATPLKDLEAQNLKLDKAYLVSCTNSRASDIAAAARVFKDAAADNNGVIPKVAPGVKFYIAAASLLEQKQAEDSGDWQVLLDAGAEPLPSGCGPCIGLGTGLLEPGEIGISASNRNFKGRMGSTDAKAYLASPEVVAASALKGKIAGPGWYQKPEGVEKVIIGEGNGVVEQDKAMSIEDALDKIIAEAESLIANAEAGLTPESTSSSSSSSSSSEEESLTEILPGFPEAISGEIIFCDADNINTDGIYPGKYTYQDNITPAKMAEVCMENYDASFGSIARAGDILVTGFNFGCGSSREQAATAILAKQIPLVVSGSFGNIFSRNSINNALMGVEVPKLVQRLREEFGDKVATRRTGWKLTWDVRRSKVVVEEASGKKWEQKVGELPPNVQEIIARGGLEKWVKSQIEA</sequence>
<evidence type="ECO:0000250" key="1"/>
<evidence type="ECO:0000255" key="2"/>
<evidence type="ECO:0000256" key="3">
    <source>
        <dbReference type="SAM" id="MobiDB-lite"/>
    </source>
</evidence>
<evidence type="ECO:0000305" key="4"/>
<accession>Q870W1</accession>
<keyword id="KW-0028">Amino-acid biosynthesis</keyword>
<keyword id="KW-0408">Iron</keyword>
<keyword id="KW-0411">Iron-sulfur</keyword>
<keyword id="KW-0456">Lyase</keyword>
<keyword id="KW-0457">Lysine biosynthesis</keyword>
<keyword id="KW-0479">Metal-binding</keyword>
<keyword id="KW-0496">Mitochondrion</keyword>
<keyword id="KW-1185">Reference proteome</keyword>
<keyword id="KW-0809">Transit peptide</keyword>
<gene>
    <name type="primary">lys-4</name>
    <name type="ORF">B14A21.110</name>
    <name type="ORF">NCU08898</name>
</gene>
<protein>
    <recommendedName>
        <fullName>Homoaconitase, mitochondrial</fullName>
        <ecNumber>4.2.1.36</ecNumber>
    </recommendedName>
    <alternativeName>
        <fullName>Homoaconitate hydratase</fullName>
    </alternativeName>
</protein>
<proteinExistence type="inferred from homology"/>
<reference key="1">
    <citation type="journal article" date="2003" name="Nucleic Acids Res.">
        <title>What's in the genome of a filamentous fungus? Analysis of the Neurospora genome sequence.</title>
        <authorList>
            <person name="Mannhaupt G."/>
            <person name="Montrone C."/>
            <person name="Haase D."/>
            <person name="Mewes H.-W."/>
            <person name="Aign V."/>
            <person name="Hoheisel J.D."/>
            <person name="Fartmann B."/>
            <person name="Nyakatura G."/>
            <person name="Kempken F."/>
            <person name="Maier J."/>
            <person name="Schulte U."/>
        </authorList>
    </citation>
    <scope>NUCLEOTIDE SEQUENCE [LARGE SCALE GENOMIC DNA]</scope>
    <source>
        <strain>ATCC 24698 / 74-OR23-1A / CBS 708.71 / DSM 1257 / FGSC 987</strain>
    </source>
</reference>
<reference key="2">
    <citation type="journal article" date="2003" name="Nature">
        <title>The genome sequence of the filamentous fungus Neurospora crassa.</title>
        <authorList>
            <person name="Galagan J.E."/>
            <person name="Calvo S.E."/>
            <person name="Borkovich K.A."/>
            <person name="Selker E.U."/>
            <person name="Read N.D."/>
            <person name="Jaffe D.B."/>
            <person name="FitzHugh W."/>
            <person name="Ma L.-J."/>
            <person name="Smirnov S."/>
            <person name="Purcell S."/>
            <person name="Rehman B."/>
            <person name="Elkins T."/>
            <person name="Engels R."/>
            <person name="Wang S."/>
            <person name="Nielsen C.B."/>
            <person name="Butler J."/>
            <person name="Endrizzi M."/>
            <person name="Qui D."/>
            <person name="Ianakiev P."/>
            <person name="Bell-Pedersen D."/>
            <person name="Nelson M.A."/>
            <person name="Werner-Washburne M."/>
            <person name="Selitrennikoff C.P."/>
            <person name="Kinsey J.A."/>
            <person name="Braun E.L."/>
            <person name="Zelter A."/>
            <person name="Schulte U."/>
            <person name="Kothe G.O."/>
            <person name="Jedd G."/>
            <person name="Mewes H.-W."/>
            <person name="Staben C."/>
            <person name="Marcotte E."/>
            <person name="Greenberg D."/>
            <person name="Roy A."/>
            <person name="Foley K."/>
            <person name="Naylor J."/>
            <person name="Stange-Thomann N."/>
            <person name="Barrett R."/>
            <person name="Gnerre S."/>
            <person name="Kamal M."/>
            <person name="Kamvysselis M."/>
            <person name="Mauceli E.W."/>
            <person name="Bielke C."/>
            <person name="Rudd S."/>
            <person name="Frishman D."/>
            <person name="Krystofova S."/>
            <person name="Rasmussen C."/>
            <person name="Metzenberg R.L."/>
            <person name="Perkins D.D."/>
            <person name="Kroken S."/>
            <person name="Cogoni C."/>
            <person name="Macino G."/>
            <person name="Catcheside D.E.A."/>
            <person name="Li W."/>
            <person name="Pratt R.J."/>
            <person name="Osmani S.A."/>
            <person name="DeSouza C.P.C."/>
            <person name="Glass N.L."/>
            <person name="Orbach M.J."/>
            <person name="Berglund J.A."/>
            <person name="Voelker R."/>
            <person name="Yarden O."/>
            <person name="Plamann M."/>
            <person name="Seiler S."/>
            <person name="Dunlap J.C."/>
            <person name="Radford A."/>
            <person name="Aramayo R."/>
            <person name="Natvig D.O."/>
            <person name="Alex L.A."/>
            <person name="Mannhaupt G."/>
            <person name="Ebbole D.J."/>
            <person name="Freitag M."/>
            <person name="Paulsen I."/>
            <person name="Sachs M.S."/>
            <person name="Lander E.S."/>
            <person name="Nusbaum C."/>
            <person name="Birren B.W."/>
        </authorList>
    </citation>
    <scope>NUCLEOTIDE SEQUENCE [LARGE SCALE GENOMIC DNA]</scope>
    <source>
        <strain>ATCC 24698 / 74-OR23-1A / CBS 708.71 / DSM 1257 / FGSC 987</strain>
    </source>
</reference>
<dbReference type="EC" id="4.2.1.36"/>
<dbReference type="EMBL" id="BX294091">
    <property type="protein sequence ID" value="CAD71225.1"/>
    <property type="molecule type" value="Genomic_DNA"/>
</dbReference>
<dbReference type="EMBL" id="CM002240">
    <property type="protein sequence ID" value="EAA29600.1"/>
    <property type="molecule type" value="Genomic_DNA"/>
</dbReference>
<dbReference type="SMR" id="Q870W1"/>
<dbReference type="FunCoup" id="Q870W1">
    <property type="interactions" value="125"/>
</dbReference>
<dbReference type="STRING" id="367110.Q870W1"/>
<dbReference type="PaxDb" id="5141-EFNCRP00000008828"/>
<dbReference type="EnsemblFungi" id="EAA29600">
    <property type="protein sequence ID" value="EAA29600"/>
    <property type="gene ID" value="NCU08898"/>
</dbReference>
<dbReference type="KEGG" id="ncr:NCU08898"/>
<dbReference type="VEuPathDB" id="FungiDB:NCU08898"/>
<dbReference type="HOGENOM" id="CLU_006714_3_1_1"/>
<dbReference type="InParanoid" id="Q870W1"/>
<dbReference type="OMA" id="EQMGEYC"/>
<dbReference type="OrthoDB" id="10262323at2759"/>
<dbReference type="UniPathway" id="UPA00033">
    <property type="reaction ID" value="UER01027"/>
</dbReference>
<dbReference type="Proteomes" id="UP000001805">
    <property type="component" value="Chromosome 2, Linkage Group V"/>
</dbReference>
<dbReference type="GO" id="GO:0005759">
    <property type="term" value="C:mitochondrial matrix"/>
    <property type="evidence" value="ECO:0007669"/>
    <property type="project" value="EnsemblFungi"/>
</dbReference>
<dbReference type="GO" id="GO:0051539">
    <property type="term" value="F:4 iron, 4 sulfur cluster binding"/>
    <property type="evidence" value="ECO:0007669"/>
    <property type="project" value="InterPro"/>
</dbReference>
<dbReference type="GO" id="GO:0004409">
    <property type="term" value="F:homoaconitate hydratase activity"/>
    <property type="evidence" value="ECO:0007669"/>
    <property type="project" value="UniProtKB-EC"/>
</dbReference>
<dbReference type="GO" id="GO:0046872">
    <property type="term" value="F:metal ion binding"/>
    <property type="evidence" value="ECO:0007669"/>
    <property type="project" value="UniProtKB-KW"/>
</dbReference>
<dbReference type="GO" id="GO:0019878">
    <property type="term" value="P:lysine biosynthetic process via aminoadipic acid"/>
    <property type="evidence" value="ECO:0007669"/>
    <property type="project" value="UniProtKB-UniPathway"/>
</dbReference>
<dbReference type="CDD" id="cd01674">
    <property type="entry name" value="Homoaconitase_Swivel"/>
    <property type="match status" value="1"/>
</dbReference>
<dbReference type="FunFam" id="3.30.499.10:FF:000013">
    <property type="entry name" value="Homoaconitase, mitochondrial"/>
    <property type="match status" value="1"/>
</dbReference>
<dbReference type="FunFam" id="3.30.499.10:FF:000016">
    <property type="entry name" value="Homoaconitase, mitochondrial"/>
    <property type="match status" value="1"/>
</dbReference>
<dbReference type="Gene3D" id="3.30.499.10">
    <property type="entry name" value="Aconitase, domain 3"/>
    <property type="match status" value="2"/>
</dbReference>
<dbReference type="Gene3D" id="3.20.19.10">
    <property type="entry name" value="Aconitase, domain 4"/>
    <property type="match status" value="1"/>
</dbReference>
<dbReference type="InterPro" id="IPR015931">
    <property type="entry name" value="Acnase/IPM_dHydase_lsu_aba_1/3"/>
</dbReference>
<dbReference type="InterPro" id="IPR001030">
    <property type="entry name" value="Acoase/IPM_deHydtase_lsu_aba"/>
</dbReference>
<dbReference type="InterPro" id="IPR015928">
    <property type="entry name" value="Aconitase/3IPM_dehydase_swvl"/>
</dbReference>
<dbReference type="InterPro" id="IPR018136">
    <property type="entry name" value="Aconitase_4Fe-4S_BS"/>
</dbReference>
<dbReference type="InterPro" id="IPR036008">
    <property type="entry name" value="Aconitase_4Fe-4S_dom"/>
</dbReference>
<dbReference type="InterPro" id="IPR000573">
    <property type="entry name" value="AconitaseA/IPMdHydase_ssu_swvl"/>
</dbReference>
<dbReference type="InterPro" id="IPR004418">
    <property type="entry name" value="Homoaconitase_mito"/>
</dbReference>
<dbReference type="InterPro" id="IPR039386">
    <property type="entry name" value="Homoaconitase_swivel"/>
</dbReference>
<dbReference type="InterPro" id="IPR050067">
    <property type="entry name" value="IPM_dehydratase_rel_enz"/>
</dbReference>
<dbReference type="NCBIfam" id="TIGR00139">
    <property type="entry name" value="h_aconitase"/>
    <property type="match status" value="1"/>
</dbReference>
<dbReference type="PANTHER" id="PTHR43822:SF2">
    <property type="entry name" value="HOMOACONITASE, MITOCHONDRIAL"/>
    <property type="match status" value="1"/>
</dbReference>
<dbReference type="PANTHER" id="PTHR43822">
    <property type="entry name" value="HOMOACONITASE, MITOCHONDRIAL-RELATED"/>
    <property type="match status" value="1"/>
</dbReference>
<dbReference type="Pfam" id="PF00330">
    <property type="entry name" value="Aconitase"/>
    <property type="match status" value="1"/>
</dbReference>
<dbReference type="Pfam" id="PF00694">
    <property type="entry name" value="Aconitase_C"/>
    <property type="match status" value="1"/>
</dbReference>
<dbReference type="PRINTS" id="PR00415">
    <property type="entry name" value="ACONITASE"/>
</dbReference>
<dbReference type="SUPFAM" id="SSF53732">
    <property type="entry name" value="Aconitase iron-sulfur domain"/>
    <property type="match status" value="1"/>
</dbReference>
<dbReference type="SUPFAM" id="SSF52016">
    <property type="entry name" value="LeuD/IlvD-like"/>
    <property type="match status" value="1"/>
</dbReference>
<dbReference type="PROSITE" id="PS00450">
    <property type="entry name" value="ACONITASE_1"/>
    <property type="match status" value="1"/>
</dbReference>
<dbReference type="PROSITE" id="PS01244">
    <property type="entry name" value="ACONITASE_2"/>
    <property type="match status" value="1"/>
</dbReference>
<organism>
    <name type="scientific">Neurospora crassa (strain ATCC 24698 / 74-OR23-1A / CBS 708.71 / DSM 1257 / FGSC 987)</name>
    <dbReference type="NCBI Taxonomy" id="367110"/>
    <lineage>
        <taxon>Eukaryota</taxon>
        <taxon>Fungi</taxon>
        <taxon>Dikarya</taxon>
        <taxon>Ascomycota</taxon>
        <taxon>Pezizomycotina</taxon>
        <taxon>Sordariomycetes</taxon>
        <taxon>Sordariomycetidae</taxon>
        <taxon>Sordariales</taxon>
        <taxon>Sordariaceae</taxon>
        <taxon>Neurospora</taxon>
    </lineage>
</organism>